<protein>
    <recommendedName>
        <fullName evidence="4">U20-hexatoxin-Hi1a</fullName>
        <shortName evidence="4">U20-HXTX-Hi1a</shortName>
    </recommendedName>
    <alternativeName>
        <fullName evidence="4">SF25 peptide</fullName>
    </alternativeName>
</protein>
<name>TK1A_HADIN</name>
<comment type="function">
    <text evidence="1">Cysteine proteinase inhibitor.</text>
</comment>
<comment type="subcellular location">
    <subcellularLocation>
        <location evidence="5">Secreted</location>
    </subcellularLocation>
</comment>
<comment type="tissue specificity">
    <text evidence="5">Expressed by the venom gland.</text>
</comment>
<dbReference type="EMBL" id="HACE01000097">
    <property type="protein sequence ID" value="CDZ18881.1"/>
    <property type="molecule type" value="mRNA"/>
</dbReference>
<dbReference type="SMR" id="A0A1D0C023"/>
<dbReference type="GO" id="GO:0005615">
    <property type="term" value="C:extracellular space"/>
    <property type="evidence" value="ECO:0007669"/>
    <property type="project" value="TreeGrafter"/>
</dbReference>
<dbReference type="GO" id="GO:0004869">
    <property type="term" value="F:cysteine-type endopeptidase inhibitor activity"/>
    <property type="evidence" value="ECO:0007669"/>
    <property type="project" value="UniProtKB-KW"/>
</dbReference>
<dbReference type="CDD" id="cd00191">
    <property type="entry name" value="TY"/>
    <property type="match status" value="2"/>
</dbReference>
<dbReference type="Gene3D" id="4.10.800.10">
    <property type="entry name" value="Thyroglobulin type-1"/>
    <property type="match status" value="2"/>
</dbReference>
<dbReference type="InterPro" id="IPR051950">
    <property type="entry name" value="Dev_reg/Prot_inhib"/>
</dbReference>
<dbReference type="InterPro" id="IPR000716">
    <property type="entry name" value="Thyroglobulin_1"/>
</dbReference>
<dbReference type="InterPro" id="IPR036857">
    <property type="entry name" value="Thyroglobulin_1_sf"/>
</dbReference>
<dbReference type="PANTHER" id="PTHR12352:SF3">
    <property type="entry name" value="NIDOGEN-2"/>
    <property type="match status" value="1"/>
</dbReference>
<dbReference type="PANTHER" id="PTHR12352">
    <property type="entry name" value="SECRETED MODULAR CALCIUM-BINDING PROTEIN"/>
    <property type="match status" value="1"/>
</dbReference>
<dbReference type="Pfam" id="PF00086">
    <property type="entry name" value="Thyroglobulin_1"/>
    <property type="match status" value="2"/>
</dbReference>
<dbReference type="SMART" id="SM00211">
    <property type="entry name" value="TY"/>
    <property type="match status" value="2"/>
</dbReference>
<dbReference type="SUPFAM" id="SSF57610">
    <property type="entry name" value="Thyroglobulin type-1 domain"/>
    <property type="match status" value="2"/>
</dbReference>
<dbReference type="PROSITE" id="PS00484">
    <property type="entry name" value="THYROGLOBULIN_1_1"/>
    <property type="match status" value="1"/>
</dbReference>
<dbReference type="PROSITE" id="PS51162">
    <property type="entry name" value="THYROGLOBULIN_1_2"/>
    <property type="match status" value="2"/>
</dbReference>
<keyword id="KW-1015">Disulfide bond</keyword>
<keyword id="KW-0646">Protease inhibitor</keyword>
<keyword id="KW-0677">Repeat</keyword>
<keyword id="KW-0964">Secreted</keyword>
<keyword id="KW-0732">Signal</keyword>
<keyword id="KW-0789">Thiol protease inhibitor</keyword>
<feature type="signal peptide" evidence="2">
    <location>
        <begin position="1"/>
        <end position="16"/>
    </location>
</feature>
<feature type="chain" id="PRO_5008897057" description="U20-hexatoxin-Hi1a" evidence="5">
    <location>
        <begin position="17"/>
        <end position="145"/>
    </location>
</feature>
<feature type="domain" description="Thyroglobulin type-1 1" evidence="3">
    <location>
        <begin position="20"/>
        <end position="73"/>
    </location>
</feature>
<feature type="domain" description="Thyroglobulin type-1 2" evidence="3">
    <location>
        <begin position="82"/>
        <end position="145"/>
    </location>
</feature>
<feature type="disulfide bond" evidence="3">
    <location>
        <begin position="23"/>
        <end position="45"/>
    </location>
</feature>
<feature type="disulfide bond" evidence="3">
    <location>
        <begin position="56"/>
        <end position="63"/>
    </location>
</feature>
<feature type="disulfide bond" evidence="3">
    <location>
        <begin position="85"/>
        <end position="106"/>
    </location>
</feature>
<feature type="disulfide bond" evidence="3">
    <location>
        <begin position="117"/>
        <end position="124"/>
    </location>
</feature>
<feature type="disulfide bond" evidence="3">
    <location>
        <begin position="126"/>
        <end position="145"/>
    </location>
</feature>
<evidence type="ECO:0000250" key="1">
    <source>
        <dbReference type="UniProtKB" id="P81439"/>
    </source>
</evidence>
<evidence type="ECO:0000255" key="2"/>
<evidence type="ECO:0000255" key="3">
    <source>
        <dbReference type="PROSITE-ProRule" id="PRU00500"/>
    </source>
</evidence>
<evidence type="ECO:0000303" key="4">
    <source>
    </source>
</evidence>
<evidence type="ECO:0000305" key="5">
    <source>
    </source>
</evidence>
<evidence type="ECO:0000312" key="6">
    <source>
        <dbReference type="EMBL" id="CDZ18881.1"/>
    </source>
</evidence>
<proteinExistence type="evidence at transcript level"/>
<organism>
    <name type="scientific">Hadronyche infensa</name>
    <name type="common">Fraser island funnel-web spider</name>
    <name type="synonym">Atrax infensus</name>
    <dbReference type="NCBI Taxonomy" id="153481"/>
    <lineage>
        <taxon>Eukaryota</taxon>
        <taxon>Metazoa</taxon>
        <taxon>Ecdysozoa</taxon>
        <taxon>Arthropoda</taxon>
        <taxon>Chelicerata</taxon>
        <taxon>Arachnida</taxon>
        <taxon>Araneae</taxon>
        <taxon>Mygalomorphae</taxon>
        <taxon>Hexathelidae</taxon>
        <taxon>Hadronyche</taxon>
    </lineage>
</organism>
<sequence>MYQFLIIVILAAFVNGAQEKTECQQHRERETRSRAPLPLRLIPECDENGEYKPLQCFKDSKFCACWDKTGQPMTEPKQGIKACECIVQRETVQKIRGLIGAFTPQCEEDGKYSKMQCHGSTGHCWCVEQVSGRNVTAPVRGRLEC</sequence>
<accession>A0A1D0C023</accession>
<reference key="1">
    <citation type="journal article" date="2020" name="Proc. Natl. Acad. Sci. U.S.A.">
        <title>Structural venomics reveals evolution of a complex venom by duplication and diversification of an ancient peptide-encoding gene.</title>
        <authorList>
            <person name="Pineda S.S."/>
            <person name="Chin Y.K."/>
            <person name="Undheim E.A.B."/>
            <person name="Senff S."/>
            <person name="Mobli M."/>
            <person name="Dauly C."/>
            <person name="Escoubas P."/>
            <person name="Nicholson G.M."/>
            <person name="Kaas Q."/>
            <person name="Guo S."/>
            <person name="Herzig V."/>
            <person name="Mattick J.S."/>
            <person name="King G.F."/>
        </authorList>
    </citation>
    <scope>NUCLEOTIDE SEQUENCE [MRNA]</scope>
    <source>
        <tissue>Venom gland</tissue>
    </source>
</reference>
<reference evidence="6" key="2">
    <citation type="thesis" date="2012" institute="The University of Queensland" country="Australia">
        <title>Probing the chemical diversity of venom from the Australian Funnel-web spider Hadronyche infensa.</title>
        <authorList>
            <person name="Pineda S.S."/>
        </authorList>
    </citation>
    <scope>NUCLEOTIDE SEQUENCE [MRNA]</scope>
    <source>
        <tissue>Venom gland</tissue>
    </source>
</reference>
<reference evidence="6" key="3">
    <citation type="submission" date="2014-07" db="EMBL/GenBank/DDBJ databases">
        <authorList>
            <person name="Zhang J.E."/>
            <person name="Yang H."/>
            <person name="Guo J."/>
            <person name="Deng Z."/>
            <person name="Luo H."/>
            <person name="Luo M."/>
            <person name="Zhao B."/>
        </authorList>
    </citation>
    <scope>NUCLEOTIDE SEQUENCE [MRNA]</scope>
    <source>
        <tissue>Venom gland</tissue>
    </source>
</reference>